<gene>
    <name evidence="1" type="primary">dxr</name>
    <name type="ordered locus">GK1255</name>
</gene>
<protein>
    <recommendedName>
        <fullName evidence="1">1-deoxy-D-xylulose 5-phosphate reductoisomerase</fullName>
        <shortName evidence="1">DXP reductoisomerase</shortName>
        <ecNumber evidence="1">1.1.1.267</ecNumber>
    </recommendedName>
    <alternativeName>
        <fullName evidence="1">1-deoxyxylulose-5-phosphate reductoisomerase</fullName>
    </alternativeName>
    <alternativeName>
        <fullName evidence="1">2-C-methyl-D-erythritol 4-phosphate synthase</fullName>
    </alternativeName>
</protein>
<reference key="1">
    <citation type="journal article" date="2004" name="Nucleic Acids Res.">
        <title>Thermoadaptation trait revealed by the genome sequence of thermophilic Geobacillus kaustophilus.</title>
        <authorList>
            <person name="Takami H."/>
            <person name="Takaki Y."/>
            <person name="Chee G.-J."/>
            <person name="Nishi S."/>
            <person name="Shimamura S."/>
            <person name="Suzuki H."/>
            <person name="Matsui S."/>
            <person name="Uchiyama I."/>
        </authorList>
    </citation>
    <scope>NUCLEOTIDE SEQUENCE [LARGE SCALE GENOMIC DNA]</scope>
    <source>
        <strain>HTA426</strain>
    </source>
</reference>
<dbReference type="EC" id="1.1.1.267" evidence="1"/>
<dbReference type="EMBL" id="BA000043">
    <property type="protein sequence ID" value="BAD75540.1"/>
    <property type="molecule type" value="Genomic_DNA"/>
</dbReference>
<dbReference type="RefSeq" id="WP_011230755.1">
    <property type="nucleotide sequence ID" value="NC_006510.1"/>
</dbReference>
<dbReference type="SMR" id="Q5L0J6"/>
<dbReference type="STRING" id="235909.GK1255"/>
<dbReference type="KEGG" id="gka:GK1255"/>
<dbReference type="eggNOG" id="COG0743">
    <property type="taxonomic scope" value="Bacteria"/>
</dbReference>
<dbReference type="HOGENOM" id="CLU_035714_4_0_9"/>
<dbReference type="UniPathway" id="UPA00056">
    <property type="reaction ID" value="UER00092"/>
</dbReference>
<dbReference type="Proteomes" id="UP000001172">
    <property type="component" value="Chromosome"/>
</dbReference>
<dbReference type="GO" id="GO:0030604">
    <property type="term" value="F:1-deoxy-D-xylulose-5-phosphate reductoisomerase activity"/>
    <property type="evidence" value="ECO:0007669"/>
    <property type="project" value="UniProtKB-UniRule"/>
</dbReference>
<dbReference type="GO" id="GO:0030145">
    <property type="term" value="F:manganese ion binding"/>
    <property type="evidence" value="ECO:0007669"/>
    <property type="project" value="TreeGrafter"/>
</dbReference>
<dbReference type="GO" id="GO:0070402">
    <property type="term" value="F:NADPH binding"/>
    <property type="evidence" value="ECO:0007669"/>
    <property type="project" value="InterPro"/>
</dbReference>
<dbReference type="GO" id="GO:0051484">
    <property type="term" value="P:isopentenyl diphosphate biosynthetic process, methylerythritol 4-phosphate pathway involved in terpenoid biosynthetic process"/>
    <property type="evidence" value="ECO:0007669"/>
    <property type="project" value="TreeGrafter"/>
</dbReference>
<dbReference type="FunFam" id="3.40.50.720:FF:000045">
    <property type="entry name" value="1-deoxy-D-xylulose 5-phosphate reductoisomerase"/>
    <property type="match status" value="1"/>
</dbReference>
<dbReference type="Gene3D" id="1.10.1740.10">
    <property type="match status" value="1"/>
</dbReference>
<dbReference type="Gene3D" id="3.40.50.720">
    <property type="entry name" value="NAD(P)-binding Rossmann-like Domain"/>
    <property type="match status" value="1"/>
</dbReference>
<dbReference type="HAMAP" id="MF_00183">
    <property type="entry name" value="DXP_reductoisom"/>
    <property type="match status" value="1"/>
</dbReference>
<dbReference type="InterPro" id="IPR003821">
    <property type="entry name" value="DXP_reductoisomerase"/>
</dbReference>
<dbReference type="InterPro" id="IPR013644">
    <property type="entry name" value="DXP_reductoisomerase_C"/>
</dbReference>
<dbReference type="InterPro" id="IPR013512">
    <property type="entry name" value="DXP_reductoisomerase_N"/>
</dbReference>
<dbReference type="InterPro" id="IPR026877">
    <property type="entry name" value="DXPR_C"/>
</dbReference>
<dbReference type="InterPro" id="IPR036169">
    <property type="entry name" value="DXPR_C_sf"/>
</dbReference>
<dbReference type="InterPro" id="IPR036291">
    <property type="entry name" value="NAD(P)-bd_dom_sf"/>
</dbReference>
<dbReference type="NCBIfam" id="TIGR00243">
    <property type="entry name" value="Dxr"/>
    <property type="match status" value="1"/>
</dbReference>
<dbReference type="NCBIfam" id="NF009114">
    <property type="entry name" value="PRK12464.1"/>
    <property type="match status" value="1"/>
</dbReference>
<dbReference type="PANTHER" id="PTHR30525">
    <property type="entry name" value="1-DEOXY-D-XYLULOSE 5-PHOSPHATE REDUCTOISOMERASE"/>
    <property type="match status" value="1"/>
</dbReference>
<dbReference type="PANTHER" id="PTHR30525:SF0">
    <property type="entry name" value="1-DEOXY-D-XYLULOSE 5-PHOSPHATE REDUCTOISOMERASE, CHLOROPLASTIC"/>
    <property type="match status" value="1"/>
</dbReference>
<dbReference type="Pfam" id="PF08436">
    <property type="entry name" value="DXP_redisom_C"/>
    <property type="match status" value="1"/>
</dbReference>
<dbReference type="Pfam" id="PF02670">
    <property type="entry name" value="DXP_reductoisom"/>
    <property type="match status" value="1"/>
</dbReference>
<dbReference type="Pfam" id="PF13288">
    <property type="entry name" value="DXPR_C"/>
    <property type="match status" value="1"/>
</dbReference>
<dbReference type="PIRSF" id="PIRSF006205">
    <property type="entry name" value="Dxp_reductismrs"/>
    <property type="match status" value="1"/>
</dbReference>
<dbReference type="SUPFAM" id="SSF69055">
    <property type="entry name" value="1-deoxy-D-xylulose-5-phosphate reductoisomerase, C-terminal domain"/>
    <property type="match status" value="1"/>
</dbReference>
<dbReference type="SUPFAM" id="SSF55347">
    <property type="entry name" value="Glyceraldehyde-3-phosphate dehydrogenase-like, C-terminal domain"/>
    <property type="match status" value="1"/>
</dbReference>
<dbReference type="SUPFAM" id="SSF51735">
    <property type="entry name" value="NAD(P)-binding Rossmann-fold domains"/>
    <property type="match status" value="1"/>
</dbReference>
<feature type="chain" id="PRO_0000163655" description="1-deoxy-D-xylulose 5-phosphate reductoisomerase">
    <location>
        <begin position="1"/>
        <end position="382"/>
    </location>
</feature>
<feature type="binding site" evidence="1">
    <location>
        <position position="10"/>
    </location>
    <ligand>
        <name>NADPH</name>
        <dbReference type="ChEBI" id="CHEBI:57783"/>
    </ligand>
</feature>
<feature type="binding site" evidence="1">
    <location>
        <position position="11"/>
    </location>
    <ligand>
        <name>NADPH</name>
        <dbReference type="ChEBI" id="CHEBI:57783"/>
    </ligand>
</feature>
<feature type="binding site" evidence="1">
    <location>
        <position position="12"/>
    </location>
    <ligand>
        <name>NADPH</name>
        <dbReference type="ChEBI" id="CHEBI:57783"/>
    </ligand>
</feature>
<feature type="binding site" evidence="1">
    <location>
        <position position="13"/>
    </location>
    <ligand>
        <name>NADPH</name>
        <dbReference type="ChEBI" id="CHEBI:57783"/>
    </ligand>
</feature>
<feature type="binding site" evidence="1">
    <location>
        <position position="36"/>
    </location>
    <ligand>
        <name>NADPH</name>
        <dbReference type="ChEBI" id="CHEBI:57783"/>
    </ligand>
</feature>
<feature type="binding site" evidence="1">
    <location>
        <position position="37"/>
    </location>
    <ligand>
        <name>NADPH</name>
        <dbReference type="ChEBI" id="CHEBI:57783"/>
    </ligand>
</feature>
<feature type="binding site" evidence="1">
    <location>
        <position position="38"/>
    </location>
    <ligand>
        <name>NADPH</name>
        <dbReference type="ChEBI" id="CHEBI:57783"/>
    </ligand>
</feature>
<feature type="binding site" evidence="1">
    <location>
        <position position="121"/>
    </location>
    <ligand>
        <name>NADPH</name>
        <dbReference type="ChEBI" id="CHEBI:57783"/>
    </ligand>
</feature>
<feature type="binding site" evidence="1">
    <location>
        <position position="122"/>
    </location>
    <ligand>
        <name>1-deoxy-D-xylulose 5-phosphate</name>
        <dbReference type="ChEBI" id="CHEBI:57792"/>
    </ligand>
</feature>
<feature type="binding site" evidence="1">
    <location>
        <position position="123"/>
    </location>
    <ligand>
        <name>NADPH</name>
        <dbReference type="ChEBI" id="CHEBI:57783"/>
    </ligand>
</feature>
<feature type="binding site" evidence="1">
    <location>
        <position position="147"/>
    </location>
    <ligand>
        <name>Mn(2+)</name>
        <dbReference type="ChEBI" id="CHEBI:29035"/>
    </ligand>
</feature>
<feature type="binding site" evidence="1">
    <location>
        <position position="148"/>
    </location>
    <ligand>
        <name>1-deoxy-D-xylulose 5-phosphate</name>
        <dbReference type="ChEBI" id="CHEBI:57792"/>
    </ligand>
</feature>
<feature type="binding site" evidence="1">
    <location>
        <position position="149"/>
    </location>
    <ligand>
        <name>1-deoxy-D-xylulose 5-phosphate</name>
        <dbReference type="ChEBI" id="CHEBI:57792"/>
    </ligand>
</feature>
<feature type="binding site" evidence="1">
    <location>
        <position position="149"/>
    </location>
    <ligand>
        <name>Mn(2+)</name>
        <dbReference type="ChEBI" id="CHEBI:29035"/>
    </ligand>
</feature>
<feature type="binding site" evidence="1">
    <location>
        <position position="173"/>
    </location>
    <ligand>
        <name>1-deoxy-D-xylulose 5-phosphate</name>
        <dbReference type="ChEBI" id="CHEBI:57792"/>
    </ligand>
</feature>
<feature type="binding site" evidence="1">
    <location>
        <position position="196"/>
    </location>
    <ligand>
        <name>1-deoxy-D-xylulose 5-phosphate</name>
        <dbReference type="ChEBI" id="CHEBI:57792"/>
    </ligand>
</feature>
<feature type="binding site" evidence="1">
    <location>
        <position position="202"/>
    </location>
    <ligand>
        <name>NADPH</name>
        <dbReference type="ChEBI" id="CHEBI:57783"/>
    </ligand>
</feature>
<feature type="binding site" evidence="1">
    <location>
        <position position="209"/>
    </location>
    <ligand>
        <name>1-deoxy-D-xylulose 5-phosphate</name>
        <dbReference type="ChEBI" id="CHEBI:57792"/>
    </ligand>
</feature>
<feature type="binding site" evidence="1">
    <location>
        <position position="214"/>
    </location>
    <ligand>
        <name>1-deoxy-D-xylulose 5-phosphate</name>
        <dbReference type="ChEBI" id="CHEBI:57792"/>
    </ligand>
</feature>
<feature type="binding site" evidence="1">
    <location>
        <position position="215"/>
    </location>
    <ligand>
        <name>1-deoxy-D-xylulose 5-phosphate</name>
        <dbReference type="ChEBI" id="CHEBI:57792"/>
    </ligand>
</feature>
<feature type="binding site" evidence="1">
    <location>
        <position position="218"/>
    </location>
    <ligand>
        <name>1-deoxy-D-xylulose 5-phosphate</name>
        <dbReference type="ChEBI" id="CHEBI:57792"/>
    </ligand>
</feature>
<feature type="binding site" evidence="1">
    <location>
        <position position="218"/>
    </location>
    <ligand>
        <name>Mn(2+)</name>
        <dbReference type="ChEBI" id="CHEBI:29035"/>
    </ligand>
</feature>
<accession>Q5L0J6</accession>
<organism>
    <name type="scientific">Geobacillus kaustophilus (strain HTA426)</name>
    <dbReference type="NCBI Taxonomy" id="235909"/>
    <lineage>
        <taxon>Bacteria</taxon>
        <taxon>Bacillati</taxon>
        <taxon>Bacillota</taxon>
        <taxon>Bacilli</taxon>
        <taxon>Bacillales</taxon>
        <taxon>Anoxybacillaceae</taxon>
        <taxon>Geobacillus</taxon>
        <taxon>Geobacillus thermoleovorans group</taxon>
    </lineage>
</organism>
<proteinExistence type="inferred from homology"/>
<sequence>MKYISILGASGSIGTQTLDVIRAHPDEFRLAAASVGKNIEAARRLIAEFSPSLVAVADRDAYKVLYREYRGRTTIVYGEEGLIEAAVCPQADVVVTAVVGSVGLVPTLKAIEAGKAIALANKETLVVAGHLVMAAAKRRGVPLLPVDSEHSAIFQCLQGERMEHVDKLILTASGGSFRDKTRRELAHVTVEEALCHPNWSMGAKITIDSATMMNKGFEVIEAHWLFGLPYERIEVVLHRESIIHSLVQFRDTSVLAQLGTPDMRVPIQYALAYPKRLPLPSAKPLDFISLGALHFAPVDFDRYRCLRLAYEAGKRGGSLPTVLNAANEEAVAAFLAGRIPFLAIEEWIERALERHRPVSNPQLEDIREIDADARAYVRSLLS</sequence>
<keyword id="KW-0414">Isoprene biosynthesis</keyword>
<keyword id="KW-0464">Manganese</keyword>
<keyword id="KW-0479">Metal-binding</keyword>
<keyword id="KW-0521">NADP</keyword>
<keyword id="KW-0560">Oxidoreductase</keyword>
<keyword id="KW-1185">Reference proteome</keyword>
<evidence type="ECO:0000255" key="1">
    <source>
        <dbReference type="HAMAP-Rule" id="MF_00183"/>
    </source>
</evidence>
<name>DXR_GEOKA</name>
<comment type="function">
    <text evidence="1">Catalyzes the NADPH-dependent rearrangement and reduction of 1-deoxy-D-xylulose-5-phosphate (DXP) to 2-C-methyl-D-erythritol 4-phosphate (MEP).</text>
</comment>
<comment type="catalytic activity">
    <reaction evidence="1">
        <text>2-C-methyl-D-erythritol 4-phosphate + NADP(+) = 1-deoxy-D-xylulose 5-phosphate + NADPH + H(+)</text>
        <dbReference type="Rhea" id="RHEA:13717"/>
        <dbReference type="ChEBI" id="CHEBI:15378"/>
        <dbReference type="ChEBI" id="CHEBI:57783"/>
        <dbReference type="ChEBI" id="CHEBI:57792"/>
        <dbReference type="ChEBI" id="CHEBI:58262"/>
        <dbReference type="ChEBI" id="CHEBI:58349"/>
        <dbReference type="EC" id="1.1.1.267"/>
    </reaction>
    <physiologicalReaction direction="right-to-left" evidence="1">
        <dbReference type="Rhea" id="RHEA:13719"/>
    </physiologicalReaction>
</comment>
<comment type="cofactor">
    <cofactor evidence="1">
        <name>Mg(2+)</name>
        <dbReference type="ChEBI" id="CHEBI:18420"/>
    </cofactor>
    <cofactor evidence="1">
        <name>Mn(2+)</name>
        <dbReference type="ChEBI" id="CHEBI:29035"/>
    </cofactor>
</comment>
<comment type="pathway">
    <text evidence="1">Isoprenoid biosynthesis; isopentenyl diphosphate biosynthesis via DXP pathway; isopentenyl diphosphate from 1-deoxy-D-xylulose 5-phosphate: step 1/6.</text>
</comment>
<comment type="similarity">
    <text evidence="1">Belongs to the DXR family.</text>
</comment>